<proteinExistence type="inferred from homology"/>
<protein>
    <recommendedName>
        <fullName evidence="1">ATP-dependent Clp protease adapter protein ClpS</fullName>
    </recommendedName>
</protein>
<dbReference type="EMBL" id="AE005674">
    <property type="protein sequence ID" value="AAN42474.1"/>
    <property type="molecule type" value="Genomic_DNA"/>
</dbReference>
<dbReference type="EMBL" id="AE014073">
    <property type="protein sequence ID" value="AAP16346.1"/>
    <property type="molecule type" value="Genomic_DNA"/>
</dbReference>
<dbReference type="RefSeq" id="NP_706767.1">
    <property type="nucleotide sequence ID" value="NC_004337.2"/>
</dbReference>
<dbReference type="RefSeq" id="WP_000520781.1">
    <property type="nucleotide sequence ID" value="NZ_WPGW01000037.1"/>
</dbReference>
<dbReference type="SMR" id="P0A8Q9"/>
<dbReference type="STRING" id="198214.SF0841"/>
<dbReference type="PaxDb" id="198214-SF0841"/>
<dbReference type="GeneID" id="1023774"/>
<dbReference type="GeneID" id="86863397"/>
<dbReference type="KEGG" id="sfl:SF0841"/>
<dbReference type="KEGG" id="sfx:S0881"/>
<dbReference type="PATRIC" id="fig|198214.7.peg.970"/>
<dbReference type="HOGENOM" id="CLU_134358_2_1_6"/>
<dbReference type="Proteomes" id="UP000001006">
    <property type="component" value="Chromosome"/>
</dbReference>
<dbReference type="Proteomes" id="UP000002673">
    <property type="component" value="Chromosome"/>
</dbReference>
<dbReference type="GO" id="GO:0030163">
    <property type="term" value="P:protein catabolic process"/>
    <property type="evidence" value="ECO:0007669"/>
    <property type="project" value="InterPro"/>
</dbReference>
<dbReference type="GO" id="GO:0006508">
    <property type="term" value="P:proteolysis"/>
    <property type="evidence" value="ECO:0007669"/>
    <property type="project" value="UniProtKB-UniRule"/>
</dbReference>
<dbReference type="FunFam" id="3.30.1390.10:FF:000002">
    <property type="entry name" value="ATP-dependent Clp protease adapter protein ClpS"/>
    <property type="match status" value="1"/>
</dbReference>
<dbReference type="Gene3D" id="3.30.1390.10">
    <property type="match status" value="1"/>
</dbReference>
<dbReference type="HAMAP" id="MF_00302">
    <property type="entry name" value="ClpS"/>
    <property type="match status" value="1"/>
</dbReference>
<dbReference type="InterPro" id="IPR022935">
    <property type="entry name" value="ClpS"/>
</dbReference>
<dbReference type="InterPro" id="IPR003769">
    <property type="entry name" value="ClpS_core"/>
</dbReference>
<dbReference type="InterPro" id="IPR014719">
    <property type="entry name" value="Ribosomal_bL12_C/ClpS-like"/>
</dbReference>
<dbReference type="NCBIfam" id="NF000670">
    <property type="entry name" value="PRK00033.1-3"/>
    <property type="match status" value="1"/>
</dbReference>
<dbReference type="NCBIfam" id="NF000672">
    <property type="entry name" value="PRK00033.1-5"/>
    <property type="match status" value="1"/>
</dbReference>
<dbReference type="PANTHER" id="PTHR33473:SF19">
    <property type="entry name" value="ATP-DEPENDENT CLP PROTEASE ADAPTER PROTEIN CLPS"/>
    <property type="match status" value="1"/>
</dbReference>
<dbReference type="PANTHER" id="PTHR33473">
    <property type="entry name" value="ATP-DEPENDENT CLP PROTEASE ADAPTER PROTEIN CLPS1, CHLOROPLASTIC"/>
    <property type="match status" value="1"/>
</dbReference>
<dbReference type="Pfam" id="PF02617">
    <property type="entry name" value="ClpS"/>
    <property type="match status" value="1"/>
</dbReference>
<dbReference type="SUPFAM" id="SSF54736">
    <property type="entry name" value="ClpS-like"/>
    <property type="match status" value="1"/>
</dbReference>
<comment type="function">
    <text evidence="1">Involved in the modulation of the specificity of the ClpAP-mediated ATP-dependent protein degradation.</text>
</comment>
<comment type="subunit">
    <text evidence="1">Binds to the N-terminal domain of the chaperone ClpA.</text>
</comment>
<comment type="similarity">
    <text evidence="1">Belongs to the ClpS family.</text>
</comment>
<feature type="chain" id="PRO_0000215749" description="ATP-dependent Clp protease adapter protein ClpS">
    <location>
        <begin position="1"/>
        <end position="106"/>
    </location>
</feature>
<evidence type="ECO:0000255" key="1">
    <source>
        <dbReference type="HAMAP-Rule" id="MF_00302"/>
    </source>
</evidence>
<organism>
    <name type="scientific">Shigella flexneri</name>
    <dbReference type="NCBI Taxonomy" id="623"/>
    <lineage>
        <taxon>Bacteria</taxon>
        <taxon>Pseudomonadati</taxon>
        <taxon>Pseudomonadota</taxon>
        <taxon>Gammaproteobacteria</taxon>
        <taxon>Enterobacterales</taxon>
        <taxon>Enterobacteriaceae</taxon>
        <taxon>Shigella</taxon>
    </lineage>
</organism>
<reference key="1">
    <citation type="journal article" date="2002" name="Nucleic Acids Res.">
        <title>Genome sequence of Shigella flexneri 2a: insights into pathogenicity through comparison with genomes of Escherichia coli K12 and O157.</title>
        <authorList>
            <person name="Jin Q."/>
            <person name="Yuan Z."/>
            <person name="Xu J."/>
            <person name="Wang Y."/>
            <person name="Shen Y."/>
            <person name="Lu W."/>
            <person name="Wang J."/>
            <person name="Liu H."/>
            <person name="Yang J."/>
            <person name="Yang F."/>
            <person name="Zhang X."/>
            <person name="Zhang J."/>
            <person name="Yang G."/>
            <person name="Wu H."/>
            <person name="Qu D."/>
            <person name="Dong J."/>
            <person name="Sun L."/>
            <person name="Xue Y."/>
            <person name="Zhao A."/>
            <person name="Gao Y."/>
            <person name="Zhu J."/>
            <person name="Kan B."/>
            <person name="Ding K."/>
            <person name="Chen S."/>
            <person name="Cheng H."/>
            <person name="Yao Z."/>
            <person name="He B."/>
            <person name="Chen R."/>
            <person name="Ma D."/>
            <person name="Qiang B."/>
            <person name="Wen Y."/>
            <person name="Hou Y."/>
            <person name="Yu J."/>
        </authorList>
    </citation>
    <scope>NUCLEOTIDE SEQUENCE [LARGE SCALE GENOMIC DNA]</scope>
    <source>
        <strain>301 / Serotype 2a</strain>
    </source>
</reference>
<reference key="2">
    <citation type="journal article" date="2003" name="Infect. Immun.">
        <title>Complete genome sequence and comparative genomics of Shigella flexneri serotype 2a strain 2457T.</title>
        <authorList>
            <person name="Wei J."/>
            <person name="Goldberg M.B."/>
            <person name="Burland V."/>
            <person name="Venkatesan M.M."/>
            <person name="Deng W."/>
            <person name="Fournier G."/>
            <person name="Mayhew G.F."/>
            <person name="Plunkett G. III"/>
            <person name="Rose D.J."/>
            <person name="Darling A."/>
            <person name="Mau B."/>
            <person name="Perna N.T."/>
            <person name="Payne S.M."/>
            <person name="Runyen-Janecky L.J."/>
            <person name="Zhou S."/>
            <person name="Schwartz D.C."/>
            <person name="Blattner F.R."/>
        </authorList>
    </citation>
    <scope>NUCLEOTIDE SEQUENCE [LARGE SCALE GENOMIC DNA]</scope>
    <source>
        <strain>ATCC 700930 / 2457T / Serotype 2a</strain>
    </source>
</reference>
<gene>
    <name evidence="1" type="primary">clpS</name>
    <name type="ordered locus">SF0841</name>
    <name type="ordered locus">S0881</name>
</gene>
<keyword id="KW-1185">Reference proteome</keyword>
<sequence length="106" mass="12179">MGKTNDWLDFDQLAEEKVRDALKPPSMYKVILVNDDYTPMEFVIDVLQKFFSYDVERATQLMLAVHYQGKAICGVFTAEVAETKVAMVNKYARENEHPLLCTLEKA</sequence>
<accession>P0A8Q9</accession>
<accession>P75832</accession>
<name>CLPS_SHIFL</name>